<feature type="signal peptide" evidence="1">
    <location>
        <begin position="1"/>
        <end position="23"/>
    </location>
</feature>
<feature type="chain" id="PRO_0000422608" description="Snaclec alboaggregin-D subunit alpha">
    <location>
        <begin position="24"/>
        <end position="158"/>
    </location>
</feature>
<feature type="domain" description="C-type lectin" evidence="2">
    <location>
        <begin position="34"/>
        <end position="153"/>
    </location>
</feature>
<feature type="disulfide bond" evidence="2">
    <location>
        <begin position="27"/>
        <end position="38"/>
    </location>
</feature>
<feature type="disulfide bond" evidence="2">
    <location>
        <begin position="55"/>
        <end position="152"/>
    </location>
</feature>
<feature type="disulfide bond" description="Interchain (with C-100 in subunit beta of heterodimeric partner)" evidence="2">
    <location>
        <position position="104"/>
    </location>
</feature>
<feature type="disulfide bond" evidence="2">
    <location>
        <begin position="127"/>
        <end position="144"/>
    </location>
</feature>
<feature type="disulfide bond" description="Interchain (with C-26 in subunit beta of tetrameric partner)" evidence="2">
    <location>
        <position position="158"/>
    </location>
</feature>
<feature type="sequence variant">
    <original>V</original>
    <variation>I</variation>
    <location>
        <position position="80"/>
    </location>
</feature>
<feature type="unsure residue">
    <location>
        <position position="67"/>
    </location>
</feature>
<feature type="unsure residue">
    <location>
        <position position="84"/>
    </location>
</feature>
<dbReference type="SMR" id="P0DM38"/>
<dbReference type="GO" id="GO:0005576">
    <property type="term" value="C:extracellular region"/>
    <property type="evidence" value="ECO:0007669"/>
    <property type="project" value="UniProtKB-SubCell"/>
</dbReference>
<dbReference type="GO" id="GO:0090729">
    <property type="term" value="F:toxin activity"/>
    <property type="evidence" value="ECO:0007669"/>
    <property type="project" value="UniProtKB-KW"/>
</dbReference>
<dbReference type="FunFam" id="3.10.100.10:FF:000087">
    <property type="entry name" value="Snaclec rhodocetin subunit delta"/>
    <property type="match status" value="1"/>
</dbReference>
<dbReference type="Gene3D" id="3.10.100.10">
    <property type="entry name" value="Mannose-Binding Protein A, subunit A"/>
    <property type="match status" value="1"/>
</dbReference>
<dbReference type="InterPro" id="IPR001304">
    <property type="entry name" value="C-type_lectin-like"/>
</dbReference>
<dbReference type="InterPro" id="IPR016186">
    <property type="entry name" value="C-type_lectin-like/link_sf"/>
</dbReference>
<dbReference type="InterPro" id="IPR050111">
    <property type="entry name" value="C-type_lectin/snaclec_domain"/>
</dbReference>
<dbReference type="InterPro" id="IPR018378">
    <property type="entry name" value="C-type_lectin_CS"/>
</dbReference>
<dbReference type="InterPro" id="IPR016187">
    <property type="entry name" value="CTDL_fold"/>
</dbReference>
<dbReference type="PANTHER" id="PTHR22803">
    <property type="entry name" value="MANNOSE, PHOSPHOLIPASE, LECTIN RECEPTOR RELATED"/>
    <property type="match status" value="1"/>
</dbReference>
<dbReference type="Pfam" id="PF00059">
    <property type="entry name" value="Lectin_C"/>
    <property type="match status" value="1"/>
</dbReference>
<dbReference type="PRINTS" id="PR01504">
    <property type="entry name" value="PNCREATITSAP"/>
</dbReference>
<dbReference type="SMART" id="SM00034">
    <property type="entry name" value="CLECT"/>
    <property type="match status" value="1"/>
</dbReference>
<dbReference type="SUPFAM" id="SSF56436">
    <property type="entry name" value="C-type lectin-like"/>
    <property type="match status" value="1"/>
</dbReference>
<dbReference type="PROSITE" id="PS00615">
    <property type="entry name" value="C_TYPE_LECTIN_1"/>
    <property type="match status" value="1"/>
</dbReference>
<dbReference type="PROSITE" id="PS50041">
    <property type="entry name" value="C_TYPE_LECTIN_2"/>
    <property type="match status" value="1"/>
</dbReference>
<organism>
    <name type="scientific">Trimeresurus albolabris</name>
    <name type="common">White-lipped pit viper</name>
    <name type="synonym">Cryptelytrops albolabris</name>
    <dbReference type="NCBI Taxonomy" id="8765"/>
    <lineage>
        <taxon>Eukaryota</taxon>
        <taxon>Metazoa</taxon>
        <taxon>Chordata</taxon>
        <taxon>Craniata</taxon>
        <taxon>Vertebrata</taxon>
        <taxon>Euteleostomi</taxon>
        <taxon>Lepidosauria</taxon>
        <taxon>Squamata</taxon>
        <taxon>Bifurcata</taxon>
        <taxon>Unidentata</taxon>
        <taxon>Episquamata</taxon>
        <taxon>Toxicofera</taxon>
        <taxon>Serpentes</taxon>
        <taxon>Colubroidea</taxon>
        <taxon>Viperidae</taxon>
        <taxon>Crotalinae</taxon>
        <taxon>Trimeresurus</taxon>
    </lineage>
</organism>
<accession>P0DM38</accession>
<protein>
    <recommendedName>
        <fullName>Snaclec alboaggregin-D subunit alpha</fullName>
    </recommendedName>
</protein>
<comment type="function">
    <text evidence="3">Snaclec that induces human platelet aggregation in the absence of any cofactor with the EC(50) of 0.25 nM and causes tyrosine phosphorylation in human platelets. Antibodies against either platelet GPIbalpha (GP1BA) or GPVI (GP6) inhibit alboaggregin D-induced platelet aggregation. Only the combination of these two antibodies completely inhibit aggregation, suggesting that it acts through both GPIbalpha (GP1BA) and GPVI (GP6).</text>
</comment>
<comment type="subunit">
    <text evidence="3">Tetramer of heterodimers of alpha and beta subunits (alphabeta)(4); disulfide-linked.</text>
</comment>
<comment type="subcellular location">
    <subcellularLocation>
        <location evidence="3">Secreted</location>
    </subcellularLocation>
</comment>
<comment type="tissue specificity">
    <text evidence="3">Expressed by the venom gland.</text>
</comment>
<comment type="similarity">
    <text evidence="4">Belongs to the snaclec family.</text>
</comment>
<comment type="caution">
    <text evidence="4">Position 67 and 84 are wrongly translated from the nucleotide sequence, it is why a feature 'unsure' is indicated. AGC (position 67) code for a Ser but a Val is indicated instead, whereas CTA (position 84) code for a Leu but a Iso is indicated instead.</text>
</comment>
<sequence>MGRFIFGSFGLLVVFLSLSGTGADFDCPPGWSAYDRYCYQAFSEPKTWEDAESFCMEGVKDSHLVSVESSGEADFVAQLVNENIKTSFRYVWIGLRIQNKEQQCRSEWSDASSVSYENLIKKVSKKCYGLKKGTELRTWFNVYCAELNPFICKFPPEC</sequence>
<keyword id="KW-1015">Disulfide bond</keyword>
<keyword id="KW-1199">Hemostasis impairing toxin</keyword>
<keyword id="KW-1202">Platelet aggregation activating toxin</keyword>
<keyword id="KW-0964">Secreted</keyword>
<keyword id="KW-0732">Signal</keyword>
<keyword id="KW-0800">Toxin</keyword>
<reference key="1">
    <citation type="journal article" date="2012" name="Toxicon">
        <title>Molecular cloning and characterization of alboaggregin D, a novel platelet activating protein, from Green pit viper (Cryptelytrops albolabris) venom.</title>
        <authorList>
            <person name="Mekchay P."/>
            <person name="Rojnuckarin P."/>
        </authorList>
    </citation>
    <scope>NUCLEOTIDE SEQUENCE [MRNA]</scope>
    <scope>FUNCTION</scope>
    <scope>SUBUNIT</scope>
    <scope>SUBCELLULAR LOCATION</scope>
    <scope>TISSUE SPECIFICITY</scope>
    <scope>IDENTIFICATION BY MASS SPECTROMETRY</scope>
    <source>
        <tissue>Venom</tissue>
        <tissue>Venom gland</tissue>
    </source>
</reference>
<proteinExistence type="evidence at protein level"/>
<name>SLDA_TRIAB</name>
<evidence type="ECO:0000250" key="1"/>
<evidence type="ECO:0000255" key="2">
    <source>
        <dbReference type="PROSITE-ProRule" id="PRU00040"/>
    </source>
</evidence>
<evidence type="ECO:0000269" key="3">
    <source>
    </source>
</evidence>
<evidence type="ECO:0000305" key="4"/>